<reference key="1">
    <citation type="journal article" date="2008" name="PLoS ONE">
        <title>Genome sequence of Brucella abortus vaccine strain S19 compared to virulent strains yields candidate virulence genes.</title>
        <authorList>
            <person name="Crasta O.R."/>
            <person name="Folkerts O."/>
            <person name="Fei Z."/>
            <person name="Mane S.P."/>
            <person name="Evans C."/>
            <person name="Martino-Catt S."/>
            <person name="Bricker B."/>
            <person name="Yu G."/>
            <person name="Du L."/>
            <person name="Sobral B.W."/>
        </authorList>
    </citation>
    <scope>NUCLEOTIDE SEQUENCE [LARGE SCALE GENOMIC DNA]</scope>
    <source>
        <strain>S19</strain>
    </source>
</reference>
<evidence type="ECO:0000255" key="1">
    <source>
        <dbReference type="HAMAP-Rule" id="MF_00374"/>
    </source>
</evidence>
<evidence type="ECO:0000305" key="2"/>
<comment type="similarity">
    <text evidence="1">Belongs to the universal ribosomal protein uL29 family.</text>
</comment>
<sequence>MKAADVRAKSLDQLNDELGTLKKEQFNLRFQKATGQLEKTARVKQVRRDIARIKTIARQKAAESKA</sequence>
<name>RL29_BRUA1</name>
<accession>B2S671</accession>
<organism>
    <name type="scientific">Brucella abortus (strain S19)</name>
    <dbReference type="NCBI Taxonomy" id="430066"/>
    <lineage>
        <taxon>Bacteria</taxon>
        <taxon>Pseudomonadati</taxon>
        <taxon>Pseudomonadota</taxon>
        <taxon>Alphaproteobacteria</taxon>
        <taxon>Hyphomicrobiales</taxon>
        <taxon>Brucellaceae</taxon>
        <taxon>Brucella/Ochrobactrum group</taxon>
        <taxon>Brucella</taxon>
    </lineage>
</organism>
<dbReference type="EMBL" id="CP000887">
    <property type="protein sequence ID" value="ACD72668.1"/>
    <property type="molecule type" value="Genomic_DNA"/>
</dbReference>
<dbReference type="RefSeq" id="WP_002964354.1">
    <property type="nucleotide sequence ID" value="NC_010742.1"/>
</dbReference>
<dbReference type="SMR" id="B2S671"/>
<dbReference type="GeneID" id="97533532"/>
<dbReference type="KEGG" id="bmc:BAbS19_I11630"/>
<dbReference type="HOGENOM" id="CLU_158491_1_0_5"/>
<dbReference type="Proteomes" id="UP000002565">
    <property type="component" value="Chromosome 1"/>
</dbReference>
<dbReference type="GO" id="GO:0022625">
    <property type="term" value="C:cytosolic large ribosomal subunit"/>
    <property type="evidence" value="ECO:0007669"/>
    <property type="project" value="TreeGrafter"/>
</dbReference>
<dbReference type="GO" id="GO:0003735">
    <property type="term" value="F:structural constituent of ribosome"/>
    <property type="evidence" value="ECO:0007669"/>
    <property type="project" value="InterPro"/>
</dbReference>
<dbReference type="GO" id="GO:0006412">
    <property type="term" value="P:translation"/>
    <property type="evidence" value="ECO:0007669"/>
    <property type="project" value="UniProtKB-UniRule"/>
</dbReference>
<dbReference type="CDD" id="cd00427">
    <property type="entry name" value="Ribosomal_L29_HIP"/>
    <property type="match status" value="1"/>
</dbReference>
<dbReference type="FunFam" id="1.10.287.310:FF:000001">
    <property type="entry name" value="50S ribosomal protein L29"/>
    <property type="match status" value="1"/>
</dbReference>
<dbReference type="Gene3D" id="1.10.287.310">
    <property type="match status" value="1"/>
</dbReference>
<dbReference type="HAMAP" id="MF_00374">
    <property type="entry name" value="Ribosomal_uL29"/>
    <property type="match status" value="1"/>
</dbReference>
<dbReference type="InterPro" id="IPR050063">
    <property type="entry name" value="Ribosomal_protein_uL29"/>
</dbReference>
<dbReference type="InterPro" id="IPR001854">
    <property type="entry name" value="Ribosomal_uL29"/>
</dbReference>
<dbReference type="InterPro" id="IPR018254">
    <property type="entry name" value="Ribosomal_uL29_CS"/>
</dbReference>
<dbReference type="InterPro" id="IPR036049">
    <property type="entry name" value="Ribosomal_uL29_sf"/>
</dbReference>
<dbReference type="NCBIfam" id="TIGR00012">
    <property type="entry name" value="L29"/>
    <property type="match status" value="1"/>
</dbReference>
<dbReference type="PANTHER" id="PTHR10916">
    <property type="entry name" value="60S RIBOSOMAL PROTEIN L35/50S RIBOSOMAL PROTEIN L29"/>
    <property type="match status" value="1"/>
</dbReference>
<dbReference type="PANTHER" id="PTHR10916:SF0">
    <property type="entry name" value="LARGE RIBOSOMAL SUBUNIT PROTEIN UL29C"/>
    <property type="match status" value="1"/>
</dbReference>
<dbReference type="Pfam" id="PF00831">
    <property type="entry name" value="Ribosomal_L29"/>
    <property type="match status" value="1"/>
</dbReference>
<dbReference type="SUPFAM" id="SSF46561">
    <property type="entry name" value="Ribosomal protein L29 (L29p)"/>
    <property type="match status" value="1"/>
</dbReference>
<dbReference type="PROSITE" id="PS00579">
    <property type="entry name" value="RIBOSOMAL_L29"/>
    <property type="match status" value="1"/>
</dbReference>
<gene>
    <name evidence="1" type="primary">rpmC</name>
    <name type="ordered locus">BAbS19_I11630</name>
</gene>
<protein>
    <recommendedName>
        <fullName evidence="1">Large ribosomal subunit protein uL29</fullName>
    </recommendedName>
    <alternativeName>
        <fullName evidence="2">50S ribosomal protein L29</fullName>
    </alternativeName>
</protein>
<keyword id="KW-0687">Ribonucleoprotein</keyword>
<keyword id="KW-0689">Ribosomal protein</keyword>
<feature type="chain" id="PRO_1000121738" description="Large ribosomal subunit protein uL29">
    <location>
        <begin position="1"/>
        <end position="66"/>
    </location>
</feature>
<proteinExistence type="inferred from homology"/>